<keyword id="KW-0067">ATP-binding</keyword>
<keyword id="KW-0143">Chaperone</keyword>
<keyword id="KW-0479">Metal-binding</keyword>
<keyword id="KW-0547">Nucleotide-binding</keyword>
<keyword id="KW-1185">Reference proteome</keyword>
<keyword id="KW-0862">Zinc</keyword>
<accession>A0JXL2</accession>
<gene>
    <name evidence="1" type="primary">clpX</name>
    <name type="ordered locus">Arth_2403</name>
</gene>
<proteinExistence type="inferred from homology"/>
<name>CLPX_ARTS2</name>
<comment type="function">
    <text evidence="1">ATP-dependent specificity component of the Clp protease. It directs the protease to specific substrates. Can perform chaperone functions in the absence of ClpP.</text>
</comment>
<comment type="subunit">
    <text evidence="1">Component of the ClpX-ClpP complex. Forms a hexameric ring that, in the presence of ATP, binds to fourteen ClpP subunits assembled into a disk-like structure with a central cavity, resembling the structure of eukaryotic proteasomes.</text>
</comment>
<comment type="similarity">
    <text evidence="1">Belongs to the ClpX chaperone family.</text>
</comment>
<evidence type="ECO:0000255" key="1">
    <source>
        <dbReference type="HAMAP-Rule" id="MF_00175"/>
    </source>
</evidence>
<evidence type="ECO:0000255" key="2">
    <source>
        <dbReference type="PROSITE-ProRule" id="PRU01250"/>
    </source>
</evidence>
<reference key="1">
    <citation type="journal article" date="2013" name="Stand. Genomic Sci.">
        <title>Complete genome sequence of Arthrobacter sp. strain FB24.</title>
        <authorList>
            <person name="Nakatsu C.H."/>
            <person name="Barabote R."/>
            <person name="Thompson S."/>
            <person name="Bruce D."/>
            <person name="Detter C."/>
            <person name="Brettin T."/>
            <person name="Han C."/>
            <person name="Beasley F."/>
            <person name="Chen W."/>
            <person name="Konopka A."/>
            <person name="Xie G."/>
        </authorList>
    </citation>
    <scope>NUCLEOTIDE SEQUENCE [LARGE SCALE GENOMIC DNA]</scope>
    <source>
        <strain>FB24</strain>
    </source>
</reference>
<feature type="chain" id="PRO_1000024513" description="ATP-dependent Clp protease ATP-binding subunit ClpX">
    <location>
        <begin position="1"/>
        <end position="429"/>
    </location>
</feature>
<feature type="domain" description="ClpX-type ZB" evidence="2">
    <location>
        <begin position="1"/>
        <end position="54"/>
    </location>
</feature>
<feature type="binding site" evidence="2">
    <location>
        <position position="13"/>
    </location>
    <ligand>
        <name>Zn(2+)</name>
        <dbReference type="ChEBI" id="CHEBI:29105"/>
    </ligand>
</feature>
<feature type="binding site" evidence="2">
    <location>
        <position position="16"/>
    </location>
    <ligand>
        <name>Zn(2+)</name>
        <dbReference type="ChEBI" id="CHEBI:29105"/>
    </ligand>
</feature>
<feature type="binding site" evidence="2">
    <location>
        <position position="35"/>
    </location>
    <ligand>
        <name>Zn(2+)</name>
        <dbReference type="ChEBI" id="CHEBI:29105"/>
    </ligand>
</feature>
<feature type="binding site" evidence="2">
    <location>
        <position position="38"/>
    </location>
    <ligand>
        <name>Zn(2+)</name>
        <dbReference type="ChEBI" id="CHEBI:29105"/>
    </ligand>
</feature>
<feature type="binding site" evidence="1">
    <location>
        <begin position="128"/>
        <end position="135"/>
    </location>
    <ligand>
        <name>ATP</name>
        <dbReference type="ChEBI" id="CHEBI:30616"/>
    </ligand>
</feature>
<sequence>MARIGESTDLLKCSFCGKSQKQVRKLIAGPGVYICDECIELCNEIIEEELAEVADLGSFELPKPREIYDFLQEYVIGQEPAKRSLAVAVYNHYKRIQAGHAPKSGSLAEGVHHDDVEIAKSNILLIGPTGCGKTYLAQTLARRLNVPFAVADATALTEAGYVGEDVENILLKLIQAADYDVKKAEQGIIYIDEIDKISRKSENPSITRDVSGEGVQQALLKILEGTVASVPPQGGRKHPHQEFIQIDTTNVLFIVAGAFAGLEDIIGSRSGRKGIGFGAPLNEVKNNSDSYGEVMPEDLLKFGLIPEFIGRLPVITTVSNLDRPALIQILSTPKNALVKQYQKMFQLDGVELLFDDEALDVIADQALERGTGARGLRAIMEEVLLPVMFDLPSRDDIASVVITADVVAKKAPPTMIAHDVVAKRRNKSA</sequence>
<organism>
    <name type="scientific">Arthrobacter sp. (strain FB24)</name>
    <dbReference type="NCBI Taxonomy" id="290399"/>
    <lineage>
        <taxon>Bacteria</taxon>
        <taxon>Bacillati</taxon>
        <taxon>Actinomycetota</taxon>
        <taxon>Actinomycetes</taxon>
        <taxon>Micrococcales</taxon>
        <taxon>Micrococcaceae</taxon>
        <taxon>Arthrobacter</taxon>
    </lineage>
</organism>
<protein>
    <recommendedName>
        <fullName evidence="1">ATP-dependent Clp protease ATP-binding subunit ClpX</fullName>
    </recommendedName>
</protein>
<dbReference type="EMBL" id="CP000454">
    <property type="protein sequence ID" value="ABK03782.1"/>
    <property type="molecule type" value="Genomic_DNA"/>
</dbReference>
<dbReference type="RefSeq" id="WP_011692245.1">
    <property type="nucleotide sequence ID" value="NC_008541.1"/>
</dbReference>
<dbReference type="SMR" id="A0JXL2"/>
<dbReference type="STRING" id="290399.Arth_2403"/>
<dbReference type="KEGG" id="art:Arth_2403"/>
<dbReference type="eggNOG" id="COG1219">
    <property type="taxonomic scope" value="Bacteria"/>
</dbReference>
<dbReference type="HOGENOM" id="CLU_014218_8_2_11"/>
<dbReference type="OrthoDB" id="9804062at2"/>
<dbReference type="Proteomes" id="UP000000754">
    <property type="component" value="Chromosome"/>
</dbReference>
<dbReference type="GO" id="GO:0009376">
    <property type="term" value="C:HslUV protease complex"/>
    <property type="evidence" value="ECO:0007669"/>
    <property type="project" value="TreeGrafter"/>
</dbReference>
<dbReference type="GO" id="GO:0005524">
    <property type="term" value="F:ATP binding"/>
    <property type="evidence" value="ECO:0007669"/>
    <property type="project" value="UniProtKB-UniRule"/>
</dbReference>
<dbReference type="GO" id="GO:0016887">
    <property type="term" value="F:ATP hydrolysis activity"/>
    <property type="evidence" value="ECO:0007669"/>
    <property type="project" value="InterPro"/>
</dbReference>
<dbReference type="GO" id="GO:0140662">
    <property type="term" value="F:ATP-dependent protein folding chaperone"/>
    <property type="evidence" value="ECO:0007669"/>
    <property type="project" value="InterPro"/>
</dbReference>
<dbReference type="GO" id="GO:0046983">
    <property type="term" value="F:protein dimerization activity"/>
    <property type="evidence" value="ECO:0007669"/>
    <property type="project" value="InterPro"/>
</dbReference>
<dbReference type="GO" id="GO:0051082">
    <property type="term" value="F:unfolded protein binding"/>
    <property type="evidence" value="ECO:0007669"/>
    <property type="project" value="UniProtKB-UniRule"/>
</dbReference>
<dbReference type="GO" id="GO:0008270">
    <property type="term" value="F:zinc ion binding"/>
    <property type="evidence" value="ECO:0007669"/>
    <property type="project" value="InterPro"/>
</dbReference>
<dbReference type="GO" id="GO:0051301">
    <property type="term" value="P:cell division"/>
    <property type="evidence" value="ECO:0007669"/>
    <property type="project" value="TreeGrafter"/>
</dbReference>
<dbReference type="GO" id="GO:0051603">
    <property type="term" value="P:proteolysis involved in protein catabolic process"/>
    <property type="evidence" value="ECO:0007669"/>
    <property type="project" value="TreeGrafter"/>
</dbReference>
<dbReference type="CDD" id="cd19497">
    <property type="entry name" value="RecA-like_ClpX"/>
    <property type="match status" value="1"/>
</dbReference>
<dbReference type="FunFam" id="1.10.8.60:FF:000002">
    <property type="entry name" value="ATP-dependent Clp protease ATP-binding subunit ClpX"/>
    <property type="match status" value="1"/>
</dbReference>
<dbReference type="FunFam" id="3.40.50.300:FF:000005">
    <property type="entry name" value="ATP-dependent Clp protease ATP-binding subunit ClpX"/>
    <property type="match status" value="1"/>
</dbReference>
<dbReference type="Gene3D" id="1.10.8.60">
    <property type="match status" value="1"/>
</dbReference>
<dbReference type="Gene3D" id="6.20.220.10">
    <property type="entry name" value="ClpX chaperone, C4-type zinc finger domain"/>
    <property type="match status" value="1"/>
</dbReference>
<dbReference type="Gene3D" id="3.40.50.300">
    <property type="entry name" value="P-loop containing nucleotide triphosphate hydrolases"/>
    <property type="match status" value="1"/>
</dbReference>
<dbReference type="HAMAP" id="MF_00175">
    <property type="entry name" value="ClpX"/>
    <property type="match status" value="1"/>
</dbReference>
<dbReference type="InterPro" id="IPR003593">
    <property type="entry name" value="AAA+_ATPase"/>
</dbReference>
<dbReference type="InterPro" id="IPR050052">
    <property type="entry name" value="ATP-dep_Clp_protease_ClpX"/>
</dbReference>
<dbReference type="InterPro" id="IPR003959">
    <property type="entry name" value="ATPase_AAA_core"/>
</dbReference>
<dbReference type="InterPro" id="IPR019489">
    <property type="entry name" value="Clp_ATPase_C"/>
</dbReference>
<dbReference type="InterPro" id="IPR004487">
    <property type="entry name" value="Clp_protease_ATP-bd_su_ClpX"/>
</dbReference>
<dbReference type="InterPro" id="IPR046425">
    <property type="entry name" value="ClpX_bact"/>
</dbReference>
<dbReference type="InterPro" id="IPR027417">
    <property type="entry name" value="P-loop_NTPase"/>
</dbReference>
<dbReference type="InterPro" id="IPR010603">
    <property type="entry name" value="Znf_CppX_C4"/>
</dbReference>
<dbReference type="InterPro" id="IPR038366">
    <property type="entry name" value="Znf_CppX_C4_sf"/>
</dbReference>
<dbReference type="NCBIfam" id="TIGR00382">
    <property type="entry name" value="clpX"/>
    <property type="match status" value="1"/>
</dbReference>
<dbReference type="NCBIfam" id="NF003745">
    <property type="entry name" value="PRK05342.1"/>
    <property type="match status" value="1"/>
</dbReference>
<dbReference type="PANTHER" id="PTHR48102:SF7">
    <property type="entry name" value="ATP-DEPENDENT CLP PROTEASE ATP-BINDING SUBUNIT CLPX-LIKE, MITOCHONDRIAL"/>
    <property type="match status" value="1"/>
</dbReference>
<dbReference type="PANTHER" id="PTHR48102">
    <property type="entry name" value="ATP-DEPENDENT CLP PROTEASE ATP-BINDING SUBUNIT CLPX-LIKE, MITOCHONDRIAL-RELATED"/>
    <property type="match status" value="1"/>
</dbReference>
<dbReference type="Pfam" id="PF07724">
    <property type="entry name" value="AAA_2"/>
    <property type="match status" value="1"/>
</dbReference>
<dbReference type="Pfam" id="PF10431">
    <property type="entry name" value="ClpB_D2-small"/>
    <property type="match status" value="1"/>
</dbReference>
<dbReference type="Pfam" id="PF06689">
    <property type="entry name" value="zf-C4_ClpX"/>
    <property type="match status" value="1"/>
</dbReference>
<dbReference type="SMART" id="SM00382">
    <property type="entry name" value="AAA"/>
    <property type="match status" value="1"/>
</dbReference>
<dbReference type="SMART" id="SM01086">
    <property type="entry name" value="ClpB_D2-small"/>
    <property type="match status" value="1"/>
</dbReference>
<dbReference type="SMART" id="SM00994">
    <property type="entry name" value="zf-C4_ClpX"/>
    <property type="match status" value="1"/>
</dbReference>
<dbReference type="SUPFAM" id="SSF57716">
    <property type="entry name" value="Glucocorticoid receptor-like (DNA-binding domain)"/>
    <property type="match status" value="1"/>
</dbReference>
<dbReference type="SUPFAM" id="SSF52540">
    <property type="entry name" value="P-loop containing nucleoside triphosphate hydrolases"/>
    <property type="match status" value="1"/>
</dbReference>
<dbReference type="PROSITE" id="PS51902">
    <property type="entry name" value="CLPX_ZB"/>
    <property type="match status" value="1"/>
</dbReference>